<accession>A2C637</accession>
<evidence type="ECO:0000255" key="1">
    <source>
        <dbReference type="HAMAP-Rule" id="MF_00023"/>
    </source>
</evidence>
<evidence type="ECO:0000256" key="2">
    <source>
        <dbReference type="SAM" id="MobiDB-lite"/>
    </source>
</evidence>
<organism>
    <name type="scientific">Prochlorococcus marinus (strain MIT 9303)</name>
    <dbReference type="NCBI Taxonomy" id="59922"/>
    <lineage>
        <taxon>Bacteria</taxon>
        <taxon>Bacillati</taxon>
        <taxon>Cyanobacteriota</taxon>
        <taxon>Cyanophyceae</taxon>
        <taxon>Synechococcales</taxon>
        <taxon>Prochlorococcaceae</taxon>
        <taxon>Prochlorococcus</taxon>
    </lineage>
</organism>
<dbReference type="EMBL" id="CP000554">
    <property type="protein sequence ID" value="ABM76947.1"/>
    <property type="molecule type" value="Genomic_DNA"/>
</dbReference>
<dbReference type="RefSeq" id="WP_011824876.1">
    <property type="nucleotide sequence ID" value="NC_008820.1"/>
</dbReference>
<dbReference type="SMR" id="A2C637"/>
<dbReference type="STRING" id="59922.P9303_01921"/>
<dbReference type="KEGG" id="pmf:P9303_01921"/>
<dbReference type="HOGENOM" id="CLU_108953_0_1_3"/>
<dbReference type="BioCyc" id="PMAR59922:G1G80-186-MONOMER"/>
<dbReference type="Proteomes" id="UP000002274">
    <property type="component" value="Chromosome"/>
</dbReference>
<dbReference type="GO" id="GO:0005829">
    <property type="term" value="C:cytosol"/>
    <property type="evidence" value="ECO:0007669"/>
    <property type="project" value="TreeGrafter"/>
</dbReference>
<dbReference type="GO" id="GO:0003723">
    <property type="term" value="F:RNA binding"/>
    <property type="evidence" value="ECO:0007669"/>
    <property type="project" value="UniProtKB-UniRule"/>
</dbReference>
<dbReference type="GO" id="GO:0070929">
    <property type="term" value="P:trans-translation"/>
    <property type="evidence" value="ECO:0007669"/>
    <property type="project" value="UniProtKB-UniRule"/>
</dbReference>
<dbReference type="CDD" id="cd09294">
    <property type="entry name" value="SmpB"/>
    <property type="match status" value="1"/>
</dbReference>
<dbReference type="Gene3D" id="2.40.280.10">
    <property type="match status" value="1"/>
</dbReference>
<dbReference type="HAMAP" id="MF_00023">
    <property type="entry name" value="SmpB"/>
    <property type="match status" value="1"/>
</dbReference>
<dbReference type="InterPro" id="IPR023620">
    <property type="entry name" value="SmpB"/>
</dbReference>
<dbReference type="InterPro" id="IPR000037">
    <property type="entry name" value="SsrA-bd_prot"/>
</dbReference>
<dbReference type="InterPro" id="IPR020081">
    <property type="entry name" value="SsrA-bd_prot_CS"/>
</dbReference>
<dbReference type="NCBIfam" id="NF003843">
    <property type="entry name" value="PRK05422.1"/>
    <property type="match status" value="1"/>
</dbReference>
<dbReference type="NCBIfam" id="TIGR00086">
    <property type="entry name" value="smpB"/>
    <property type="match status" value="1"/>
</dbReference>
<dbReference type="PANTHER" id="PTHR30308:SF2">
    <property type="entry name" value="SSRA-BINDING PROTEIN"/>
    <property type="match status" value="1"/>
</dbReference>
<dbReference type="PANTHER" id="PTHR30308">
    <property type="entry name" value="TMRNA-BINDING COMPONENT OF TRANS-TRANSLATION TAGGING COMPLEX"/>
    <property type="match status" value="1"/>
</dbReference>
<dbReference type="Pfam" id="PF01668">
    <property type="entry name" value="SmpB"/>
    <property type="match status" value="1"/>
</dbReference>
<dbReference type="SUPFAM" id="SSF74982">
    <property type="entry name" value="Small protein B (SmpB)"/>
    <property type="match status" value="1"/>
</dbReference>
<dbReference type="PROSITE" id="PS01317">
    <property type="entry name" value="SSRP"/>
    <property type="match status" value="1"/>
</dbReference>
<sequence>MAKGGNKKATAAARAAANRLLADNRLARHQYEILDTLETGIELVGTEVKSIRAGQANLRDGFCLIRKGELQLHNVHISPHSHAGSYFNHDPLRTRKLLAHRREIDKLRGQLDRKGLTLIPLNLHLKGSWIKLTIGLGKGRKLHDKRQEEKRKQADREVKSALARY</sequence>
<name>SSRP_PROM3</name>
<keyword id="KW-0963">Cytoplasm</keyword>
<keyword id="KW-0694">RNA-binding</keyword>
<protein>
    <recommendedName>
        <fullName evidence="1">SsrA-binding protein</fullName>
    </recommendedName>
    <alternativeName>
        <fullName evidence="1">Small protein B</fullName>
    </alternativeName>
</protein>
<comment type="function">
    <text evidence="1">Required for rescue of stalled ribosomes mediated by trans-translation. Binds to transfer-messenger RNA (tmRNA), required for stable association of tmRNA with ribosomes. tmRNA and SmpB together mimic tRNA shape, replacing the anticodon stem-loop with SmpB. tmRNA is encoded by the ssrA gene; the 2 termini fold to resemble tRNA(Ala) and it encodes a 'tag peptide', a short internal open reading frame. During trans-translation Ala-aminoacylated tmRNA acts like a tRNA, entering the A-site of stalled ribosomes, displacing the stalled mRNA. The ribosome then switches to translate the ORF on the tmRNA; the nascent peptide is terminated with the 'tag peptide' encoded by the tmRNA and targeted for degradation. The ribosome is freed to recommence translation, which seems to be the essential function of trans-translation.</text>
</comment>
<comment type="subcellular location">
    <subcellularLocation>
        <location evidence="1">Cytoplasm</location>
    </subcellularLocation>
    <text evidence="1">The tmRNA-SmpB complex associates with stalled 70S ribosomes.</text>
</comment>
<comment type="similarity">
    <text evidence="1">Belongs to the SmpB family.</text>
</comment>
<reference key="1">
    <citation type="journal article" date="2007" name="PLoS Genet.">
        <title>Patterns and implications of gene gain and loss in the evolution of Prochlorococcus.</title>
        <authorList>
            <person name="Kettler G.C."/>
            <person name="Martiny A.C."/>
            <person name="Huang K."/>
            <person name="Zucker J."/>
            <person name="Coleman M.L."/>
            <person name="Rodrigue S."/>
            <person name="Chen F."/>
            <person name="Lapidus A."/>
            <person name="Ferriera S."/>
            <person name="Johnson J."/>
            <person name="Steglich C."/>
            <person name="Church G.M."/>
            <person name="Richardson P."/>
            <person name="Chisholm S.W."/>
        </authorList>
    </citation>
    <scope>NUCLEOTIDE SEQUENCE [LARGE SCALE GENOMIC DNA]</scope>
    <source>
        <strain>MIT 9303</strain>
    </source>
</reference>
<proteinExistence type="inferred from homology"/>
<gene>
    <name evidence="1" type="primary">smpB</name>
    <name type="ordered locus">P9303_01921</name>
</gene>
<feature type="chain" id="PRO_0000331078" description="SsrA-binding protein">
    <location>
        <begin position="1"/>
        <end position="165"/>
    </location>
</feature>
<feature type="region of interest" description="Disordered" evidence="2">
    <location>
        <begin position="141"/>
        <end position="165"/>
    </location>
</feature>
<feature type="compositionally biased region" description="Basic and acidic residues" evidence="2">
    <location>
        <begin position="145"/>
        <end position="159"/>
    </location>
</feature>